<name>YO161_YEAST</name>
<sequence length="48" mass="5428">MSYTRVDHPTGKMACHLRQILASPLFFANYVLHAAIHYPSSDIRGDIL</sequence>
<comment type="subcellular location">
    <subcellularLocation>
        <location evidence="2">Membrane</location>
        <topology evidence="2">Single-pass membrane protein</topology>
    </subcellularLocation>
</comment>
<reference key="1">
    <citation type="journal article" date="1997" name="Yeast">
        <title>Analysis of a 35.6 kb region on the right arm of Saccharomyces cerevisiae chromosome XV.</title>
        <authorList>
            <person name="Bordonne R."/>
            <person name="Camasses A."/>
            <person name="Madania A."/>
            <person name="Poch O."/>
            <person name="Tarassov I.A."/>
            <person name="Winsor B."/>
            <person name="Martin R.P."/>
        </authorList>
    </citation>
    <scope>NUCLEOTIDE SEQUENCE [GENOMIC DNA]</scope>
    <source>
        <strain>S288c / FY1678</strain>
    </source>
</reference>
<reference key="2">
    <citation type="journal article" date="1997" name="Nature">
        <title>The nucleotide sequence of Saccharomyces cerevisiae chromosome XV.</title>
        <authorList>
            <person name="Dujon B."/>
            <person name="Albermann K."/>
            <person name="Aldea M."/>
            <person name="Alexandraki D."/>
            <person name="Ansorge W."/>
            <person name="Arino J."/>
            <person name="Benes V."/>
            <person name="Bohn C."/>
            <person name="Bolotin-Fukuhara M."/>
            <person name="Bordonne R."/>
            <person name="Boyer J."/>
            <person name="Camasses A."/>
            <person name="Casamayor A."/>
            <person name="Casas C."/>
            <person name="Cheret G."/>
            <person name="Cziepluch C."/>
            <person name="Daignan-Fornier B."/>
            <person name="Dang V.-D."/>
            <person name="de Haan M."/>
            <person name="Delius H."/>
            <person name="Durand P."/>
            <person name="Fairhead C."/>
            <person name="Feldmann H."/>
            <person name="Gaillon L."/>
            <person name="Galisson F."/>
            <person name="Gamo F.-J."/>
            <person name="Gancedo C."/>
            <person name="Goffeau A."/>
            <person name="Goulding S.E."/>
            <person name="Grivell L.A."/>
            <person name="Habbig B."/>
            <person name="Hand N.J."/>
            <person name="Hani J."/>
            <person name="Hattenhorst U."/>
            <person name="Hebling U."/>
            <person name="Hernando Y."/>
            <person name="Herrero E."/>
            <person name="Heumann K."/>
            <person name="Hiesel R."/>
            <person name="Hilger F."/>
            <person name="Hofmann B."/>
            <person name="Hollenberg C.P."/>
            <person name="Hughes B."/>
            <person name="Jauniaux J.-C."/>
            <person name="Kalogeropoulos A."/>
            <person name="Katsoulou C."/>
            <person name="Kordes E."/>
            <person name="Lafuente M.J."/>
            <person name="Landt O."/>
            <person name="Louis E.J."/>
            <person name="Maarse A.C."/>
            <person name="Madania A."/>
            <person name="Mannhaupt G."/>
            <person name="Marck C."/>
            <person name="Martin R.P."/>
            <person name="Mewes H.-W."/>
            <person name="Michaux G."/>
            <person name="Paces V."/>
            <person name="Parle-McDermott A.G."/>
            <person name="Pearson B.M."/>
            <person name="Perrin A."/>
            <person name="Pettersson B."/>
            <person name="Poch O."/>
            <person name="Pohl T.M."/>
            <person name="Poirey R."/>
            <person name="Portetelle D."/>
            <person name="Pujol A."/>
            <person name="Purnelle B."/>
            <person name="Ramezani Rad M."/>
            <person name="Rechmann S."/>
            <person name="Schwager C."/>
            <person name="Schweizer M."/>
            <person name="Sor F."/>
            <person name="Sterky F."/>
            <person name="Tarassov I.A."/>
            <person name="Teodoru C."/>
            <person name="Tettelin H."/>
            <person name="Thierry A."/>
            <person name="Tobiasch E."/>
            <person name="Tzermia M."/>
            <person name="Uhlen M."/>
            <person name="Unseld M."/>
            <person name="Valens M."/>
            <person name="Vandenbol M."/>
            <person name="Vetter I."/>
            <person name="Vlcek C."/>
            <person name="Voet M."/>
            <person name="Volckaert G."/>
            <person name="Voss H."/>
            <person name="Wambutt R."/>
            <person name="Wedler H."/>
            <person name="Wiemann S."/>
            <person name="Winsor B."/>
            <person name="Wolfe K.H."/>
            <person name="Zollner A."/>
            <person name="Zumstein E."/>
            <person name="Kleine K."/>
        </authorList>
    </citation>
    <scope>NUCLEOTIDE SEQUENCE [LARGE SCALE GENOMIC DNA]</scope>
    <source>
        <strain>ATCC 204508 / S288c</strain>
    </source>
</reference>
<reference key="3">
    <citation type="journal article" date="2014" name="G3 (Bethesda)">
        <title>The reference genome sequence of Saccharomyces cerevisiae: Then and now.</title>
        <authorList>
            <person name="Engel S.R."/>
            <person name="Dietrich F.S."/>
            <person name="Fisk D.G."/>
            <person name="Binkley G."/>
            <person name="Balakrishnan R."/>
            <person name="Costanzo M.C."/>
            <person name="Dwight S.S."/>
            <person name="Hitz B.C."/>
            <person name="Karra K."/>
            <person name="Nash R.S."/>
            <person name="Weng S."/>
            <person name="Wong E.D."/>
            <person name="Lloyd P."/>
            <person name="Skrzypek M.S."/>
            <person name="Miyasato S.R."/>
            <person name="Simison M."/>
            <person name="Cherry J.M."/>
        </authorList>
    </citation>
    <scope>GENOME REANNOTATION</scope>
    <source>
        <strain>ATCC 204508 / S288c</strain>
    </source>
</reference>
<reference key="4">
    <citation type="journal article" date="2002" name="Nat. Biotechnol.">
        <title>An integrated approach for finding overlooked genes in yeast.</title>
        <authorList>
            <person name="Kumar A."/>
            <person name="Harrison P.M."/>
            <person name="Cheung K.-H."/>
            <person name="Lan N."/>
            <person name="Echols N."/>
            <person name="Bertone P."/>
            <person name="Miller P."/>
            <person name="Gerstein M.B."/>
            <person name="Snyder M."/>
        </authorList>
    </citation>
    <scope>NUCLEOTIDE SEQUENCE [GENOMIC DNA]</scope>
</reference>
<evidence type="ECO:0000255" key="1"/>
<evidence type="ECO:0000305" key="2"/>
<feature type="chain" id="PRO_0000237660" description="Uncharacterized protein YOR161C-C">
    <location>
        <begin position="1"/>
        <end position="48"/>
    </location>
</feature>
<feature type="transmembrane region" description="Helical" evidence="1">
    <location>
        <begin position="20"/>
        <end position="37"/>
    </location>
</feature>
<accession>Q8TGS0</accession>
<accession>D6W2L9</accession>
<organism>
    <name type="scientific">Saccharomyces cerevisiae (strain ATCC 204508 / S288c)</name>
    <name type="common">Baker's yeast</name>
    <dbReference type="NCBI Taxonomy" id="559292"/>
    <lineage>
        <taxon>Eukaryota</taxon>
        <taxon>Fungi</taxon>
        <taxon>Dikarya</taxon>
        <taxon>Ascomycota</taxon>
        <taxon>Saccharomycotina</taxon>
        <taxon>Saccharomycetes</taxon>
        <taxon>Saccharomycetales</taxon>
        <taxon>Saccharomycetaceae</taxon>
        <taxon>Saccharomyces</taxon>
    </lineage>
</organism>
<keyword id="KW-0472">Membrane</keyword>
<keyword id="KW-1185">Reference proteome</keyword>
<keyword id="KW-0812">Transmembrane</keyword>
<keyword id="KW-1133">Transmembrane helix</keyword>
<protein>
    <recommendedName>
        <fullName>Uncharacterized protein YOR161C-C</fullName>
    </recommendedName>
</protein>
<proteinExistence type="predicted"/>
<gene>
    <name type="ordered locus">YOR161C-C</name>
</gene>
<dbReference type="EMBL" id="U55021">
    <property type="status" value="NOT_ANNOTATED_CDS"/>
    <property type="molecule type" value="Genomic_DNA"/>
</dbReference>
<dbReference type="EMBL" id="Z75070">
    <property type="status" value="NOT_ANNOTATED_CDS"/>
    <property type="molecule type" value="Genomic_DNA"/>
</dbReference>
<dbReference type="EMBL" id="AF479915">
    <property type="protein sequence ID" value="AAL79228.1"/>
    <property type="molecule type" value="Genomic_DNA"/>
</dbReference>
<dbReference type="EMBL" id="BK006948">
    <property type="protein sequence ID" value="DAA10935.1"/>
    <property type="molecule type" value="Genomic_DNA"/>
</dbReference>
<dbReference type="RefSeq" id="NP_878172.1">
    <property type="nucleotide sequence ID" value="NM_001184625.1"/>
</dbReference>
<dbReference type="SMR" id="Q8TGS0"/>
<dbReference type="FunCoup" id="Q8TGS0">
    <property type="interactions" value="14"/>
</dbReference>
<dbReference type="STRING" id="4932.YOR161C-C"/>
<dbReference type="PaxDb" id="4932-YOR161C-C"/>
<dbReference type="EnsemblFungi" id="YOR161C-C_mRNA">
    <property type="protein sequence ID" value="YOR161C-C"/>
    <property type="gene ID" value="YOR161C-C"/>
</dbReference>
<dbReference type="GeneID" id="1466484"/>
<dbReference type="KEGG" id="sce:YOR161C-C"/>
<dbReference type="AGR" id="SGD:S000028712"/>
<dbReference type="SGD" id="S000028712">
    <property type="gene designation" value="YOR161C-C"/>
</dbReference>
<dbReference type="VEuPathDB" id="FungiDB:YOR161C-C"/>
<dbReference type="HOGENOM" id="CLU_3160299_0_0_1"/>
<dbReference type="InParanoid" id="Q8TGS0"/>
<dbReference type="OrthoDB" id="10447479at2759"/>
<dbReference type="BioCyc" id="YEAST:G3O-33908-MONOMER"/>
<dbReference type="BioGRID-ORCS" id="1466484">
    <property type="hits" value="0 hits in 10 CRISPR screens"/>
</dbReference>
<dbReference type="PRO" id="PR:Q8TGS0"/>
<dbReference type="Proteomes" id="UP000002311">
    <property type="component" value="Chromosome XV"/>
</dbReference>
<dbReference type="GO" id="GO:0016020">
    <property type="term" value="C:membrane"/>
    <property type="evidence" value="ECO:0007669"/>
    <property type="project" value="UniProtKB-SubCell"/>
</dbReference>